<sequence>MQRPFLLAYLVLSLLFNSALGFPTALVPRGSSEGTSCNSIVNGCPNLDFNWHMDQQNIMQYTLDVTSVSWVQDNTYQITIHVKGKENIDLKYLWSLKIIGVTGPKGTVQLYGYNENTYLIDNPTDFTATFEVYATQDVNSCQVWMPNFQIQFEYLQGSAAQYASSWQWGTTSFDLSTGCNNYDNQGHSQTDFPGFYWNIDCDNNCGGTKSSTTTSSTSESSTTTSSTSESSTTTSSTSESSTTTSSTSESSTSSSTTAPATPTTTSCTKEKPTPPTTTSCTKEKPTPPHHDTTPCTKKKTTTSKTCTKKTTTPVPTPSSSTTESSSAPVPTPSSSTTESSSAPVTSSTTESSSAPVPTPSSSTTESSSAPVTSSTTESSSAPVTSSTTESSSAPVPTPSSSTTESSSAPVTSSTTESSSAPVTSSTTESSSAPVTSSTTESSSAPVTSSTTESSSAPVPTPSSSTTESSSAPVTSSTTESSSAPVPTPSSSTTESSSAPVTSSTTESSSAPVPTPSSSTTESSSAPAPTPSSSTTESSSAPVTSSTTESSSAPVPTPSSSTTESSSTPVTSSTTESSSAPVPTPSSSTTESSSAPVPTPSSSTTESSSAPAPTPSSSTTESSSAPVTSSTTESSSAPVPTPSSSTTESSSAPVPTPSSSTTESSSAPVPTPSSSTTESSSAPVTSSTTESSSAPVTSSTTESSSAPVPTPSSSTTESSSAPVPTPSSSTTESSSAPVPTPSSSTTESSSAPVTSSTTESSSAPVPTPSSSTTESSSAPVPTPSSSTTESSSAPVPTPSSSTTESSVAPVPTPSSSSNITSSAPSSTPFSSSTESSSVPVPTPSSSTTESSSAPVSSSTTESSVAPVPTPSSSSNITSSAPSSIPFSSTTESFSTGTTVTPSSSKYPGSQTETSVSSTTETTIVPTKTTTSVTTPSTTTITTTVCSTGTNSAGETTSGCSPKTVTTTVPTTTTTSVTTSSTTTITTTVCSTGTNSAGETTSGCSPKTITTTVPCSTSPSETASESTTTSPTTPVTTVVSTTVVTTEYSTSTKPGGEITTTFVTKNIPTTYLTTIAPTPSVTTVTNFTPTTITTTVCSTGTNSAGETTSGCSPKTVTTTVPCSTGTGEYTTEATTLVTTAVTTTVVTTESSTGTNSAGKTTTGYTTKSVPTTYVTTLAPSAPVTPATNAVPTTITTTECSAATNAAGETTSVCSAKTIVSSASAGENTAPSATTPVTTAIPTTVITTESSVGTNSAGETTTGYTTKSIPTTYITTLIPGSNGAKNYETVATATNPISIKTTSQLATTASASSVAPVVTSPSLTGPLQSASGSAVATYSVPSISSTYQGAANIKVLGNFMWLLLALPVVF</sequence>
<name>FLO11_YEAST</name>
<evidence type="ECO:0000250" key="1"/>
<evidence type="ECO:0000255" key="2"/>
<evidence type="ECO:0000255" key="3">
    <source>
        <dbReference type="PROSITE-ProRule" id="PRU01168"/>
    </source>
</evidence>
<evidence type="ECO:0000256" key="4">
    <source>
        <dbReference type="SAM" id="MobiDB-lite"/>
    </source>
</evidence>
<evidence type="ECO:0000269" key="5">
    <source>
    </source>
</evidence>
<evidence type="ECO:0000269" key="6">
    <source>
    </source>
</evidence>
<evidence type="ECO:0000269" key="7">
    <source>
    </source>
</evidence>
<evidence type="ECO:0000269" key="8">
    <source>
    </source>
</evidence>
<evidence type="ECO:0000269" key="9">
    <source>
    </source>
</evidence>
<evidence type="ECO:0000269" key="10">
    <source>
    </source>
</evidence>
<evidence type="ECO:0000269" key="11">
    <source>
    </source>
</evidence>
<evidence type="ECO:0000269" key="12">
    <source>
    </source>
</evidence>
<evidence type="ECO:0000269" key="13">
    <source>
    </source>
</evidence>
<evidence type="ECO:0000269" key="14">
    <source>
    </source>
</evidence>
<evidence type="ECO:0000269" key="15">
    <source>
    </source>
</evidence>
<evidence type="ECO:0000269" key="16">
    <source>
    </source>
</evidence>
<evidence type="ECO:0000269" key="17">
    <source>
    </source>
</evidence>
<evidence type="ECO:0000269" key="18">
    <source>
    </source>
</evidence>
<evidence type="ECO:0000303" key="19">
    <source>
    </source>
</evidence>
<evidence type="ECO:0000303" key="20">
    <source>
    </source>
</evidence>
<evidence type="ECO:0000303" key="21">
    <source>
    </source>
</evidence>
<evidence type="ECO:0000305" key="22"/>
<evidence type="ECO:0000312" key="23">
    <source>
        <dbReference type="SGD" id="S000001458"/>
    </source>
</evidence>
<evidence type="ECO:0007744" key="24">
    <source>
        <dbReference type="PDB" id="4UYR"/>
    </source>
</evidence>
<evidence type="ECO:0007744" key="25">
    <source>
        <dbReference type="PDB" id="4UYS"/>
    </source>
</evidence>
<evidence type="ECO:0007744" key="26">
    <source>
        <dbReference type="PDB" id="4UYT"/>
    </source>
</evidence>
<evidence type="ECO:0007829" key="27">
    <source>
        <dbReference type="PDB" id="4UYR"/>
    </source>
</evidence>
<dbReference type="EMBL" id="Z38061">
    <property type="protein sequence ID" value="CAA86176.1"/>
    <property type="molecule type" value="Genomic_DNA"/>
</dbReference>
<dbReference type="EMBL" id="AH001381">
    <property type="protein sequence ID" value="AAA35014.1"/>
    <property type="molecule type" value="Genomic_DNA"/>
</dbReference>
<dbReference type="EMBL" id="AH001381">
    <property type="protein sequence ID" value="AAA35015.1"/>
    <property type="molecule type" value="Genomic_DNA"/>
</dbReference>
<dbReference type="EMBL" id="X13857">
    <property type="protein sequence ID" value="CAA32069.1"/>
    <property type="molecule type" value="Genomic_DNA"/>
</dbReference>
<dbReference type="EMBL" id="BK006942">
    <property type="protein sequence ID" value="DAA08566.1"/>
    <property type="molecule type" value="Genomic_DNA"/>
</dbReference>
<dbReference type="PIR" id="S48478">
    <property type="entry name" value="S48478"/>
</dbReference>
<dbReference type="RefSeq" id="NP_012284.3">
    <property type="nucleotide sequence ID" value="NM_001179541.3"/>
</dbReference>
<dbReference type="PDB" id="4UYR">
    <property type="method" value="X-ray"/>
    <property type="resolution" value="0.89 A"/>
    <property type="chains" value="A=22-211"/>
</dbReference>
<dbReference type="PDB" id="4UYS">
    <property type="method" value="X-ray"/>
    <property type="resolution" value="1.05 A"/>
    <property type="chains" value="A=30-211"/>
</dbReference>
<dbReference type="PDB" id="4UYT">
    <property type="method" value="X-ray"/>
    <property type="resolution" value="1.03 A"/>
    <property type="chains" value="A=30-211"/>
</dbReference>
<dbReference type="PDBsum" id="4UYR"/>
<dbReference type="PDBsum" id="4UYS"/>
<dbReference type="PDBsum" id="4UYT"/>
<dbReference type="SMR" id="P08640"/>
<dbReference type="BioGRID" id="35011">
    <property type="interactions" value="117"/>
</dbReference>
<dbReference type="DIP" id="DIP-7821N"/>
<dbReference type="FunCoup" id="P08640">
    <property type="interactions" value="190"/>
</dbReference>
<dbReference type="IntAct" id="P08640">
    <property type="interactions" value="2"/>
</dbReference>
<dbReference type="MINT" id="P08640"/>
<dbReference type="STRING" id="4932.YIR019C"/>
<dbReference type="GlyCosmos" id="P08640">
    <property type="glycosylation" value="2 sites, No reported glycans"/>
</dbReference>
<dbReference type="GlyGen" id="P08640">
    <property type="glycosylation" value="31 sites"/>
</dbReference>
<dbReference type="PaxDb" id="4932-YIR019C"/>
<dbReference type="PeptideAtlas" id="P08640"/>
<dbReference type="EnsemblFungi" id="YIR019C_mRNA">
    <property type="protein sequence ID" value="YIR019C"/>
    <property type="gene ID" value="YIR019C"/>
</dbReference>
<dbReference type="GeneID" id="854836"/>
<dbReference type="KEGG" id="sce:YIR019C"/>
<dbReference type="AGR" id="SGD:S000001458"/>
<dbReference type="SGD" id="S000001458">
    <property type="gene designation" value="FLO11"/>
</dbReference>
<dbReference type="VEuPathDB" id="FungiDB:YIR019C"/>
<dbReference type="eggNOG" id="ENOG502S1H2">
    <property type="taxonomic scope" value="Eukaryota"/>
</dbReference>
<dbReference type="GeneTree" id="ENSGT00940000176775"/>
<dbReference type="HOGENOM" id="CLU_245303_0_0_1"/>
<dbReference type="InParanoid" id="P08640"/>
<dbReference type="OMA" id="RVEYQHD"/>
<dbReference type="OrthoDB" id="4070545at2759"/>
<dbReference type="BioCyc" id="YEAST:G3O-31439-MONOMER"/>
<dbReference type="BioGRID-ORCS" id="854836">
    <property type="hits" value="2 hits in 10 CRISPR screens"/>
</dbReference>
<dbReference type="EvolutionaryTrace" id="P08640"/>
<dbReference type="PRO" id="PR:P08640"/>
<dbReference type="Proteomes" id="UP000002311">
    <property type="component" value="Chromosome IX"/>
</dbReference>
<dbReference type="RNAct" id="P08640">
    <property type="molecule type" value="protein"/>
</dbReference>
<dbReference type="GO" id="GO:0005935">
    <property type="term" value="C:cellular bud neck"/>
    <property type="evidence" value="ECO:0000314"/>
    <property type="project" value="SGD"/>
</dbReference>
<dbReference type="GO" id="GO:0005576">
    <property type="term" value="C:extracellular region"/>
    <property type="evidence" value="ECO:0000314"/>
    <property type="project" value="SGD"/>
</dbReference>
<dbReference type="GO" id="GO:0000324">
    <property type="term" value="C:fungal-type vacuole"/>
    <property type="evidence" value="ECO:0007005"/>
    <property type="project" value="SGD"/>
</dbReference>
<dbReference type="GO" id="GO:0005886">
    <property type="term" value="C:plasma membrane"/>
    <property type="evidence" value="ECO:0000314"/>
    <property type="project" value="SGD"/>
</dbReference>
<dbReference type="GO" id="GO:0098552">
    <property type="term" value="C:side of membrane"/>
    <property type="evidence" value="ECO:0007669"/>
    <property type="project" value="UniProtKB-KW"/>
</dbReference>
<dbReference type="GO" id="GO:0042802">
    <property type="term" value="F:identical protein binding"/>
    <property type="evidence" value="ECO:0000353"/>
    <property type="project" value="IntAct"/>
</dbReference>
<dbReference type="GO" id="GO:0043709">
    <property type="term" value="P:cell adhesion involved in single-species biofilm formation"/>
    <property type="evidence" value="ECO:0000315"/>
    <property type="project" value="SGD"/>
</dbReference>
<dbReference type="GO" id="GO:0098609">
    <property type="term" value="P:cell-cell adhesion"/>
    <property type="evidence" value="ECO:0000315"/>
    <property type="project" value="SGD"/>
</dbReference>
<dbReference type="GO" id="GO:0097656">
    <property type="term" value="P:cell-cell self recognition"/>
    <property type="evidence" value="ECO:0000314"/>
    <property type="project" value="UniProtKB"/>
</dbReference>
<dbReference type="GO" id="GO:0030447">
    <property type="term" value="P:filamentous growth"/>
    <property type="evidence" value="ECO:0000314"/>
    <property type="project" value="SGD"/>
</dbReference>
<dbReference type="GO" id="GO:0000128">
    <property type="term" value="P:flocculation"/>
    <property type="evidence" value="ECO:0000315"/>
    <property type="project" value="SGD"/>
</dbReference>
<dbReference type="GO" id="GO:0034109">
    <property type="term" value="P:homotypic cell-cell adhesion"/>
    <property type="evidence" value="ECO:0000314"/>
    <property type="project" value="UniProtKB"/>
</dbReference>
<dbReference type="GO" id="GO:0001403">
    <property type="term" value="P:invasive growth in response to glucose limitation"/>
    <property type="evidence" value="ECO:0000315"/>
    <property type="project" value="SGD"/>
</dbReference>
<dbReference type="GO" id="GO:0007124">
    <property type="term" value="P:pseudohyphal growth"/>
    <property type="evidence" value="ECO:0000315"/>
    <property type="project" value="SGD"/>
</dbReference>
<dbReference type="GO" id="GO:0090606">
    <property type="term" value="P:single-species surface biofilm formation"/>
    <property type="evidence" value="ECO:0000315"/>
    <property type="project" value="SGD"/>
</dbReference>
<dbReference type="InterPro" id="IPR018789">
    <property type="entry name" value="Flo11"/>
</dbReference>
<dbReference type="Pfam" id="PF10182">
    <property type="entry name" value="Flo11"/>
    <property type="match status" value="1"/>
</dbReference>
<dbReference type="SMART" id="SM01213">
    <property type="entry name" value="Flo11"/>
    <property type="match status" value="1"/>
</dbReference>
<dbReference type="PROSITE" id="PS51824">
    <property type="entry name" value="FLO11"/>
    <property type="match status" value="1"/>
</dbReference>
<comment type="function">
    <text evidence="6 7 8 10 11 12 13 14 15 16 17 18">Homophilic binding protein that enables kin discrimination in heterogeneous yeast populations by mediating homotypic cell-cell interactions during flocculation, a reversible and asexual process in which cells adhere to form aggregates (flocs) (PubMed:17921350, PubMed:22129043, PubMed:25960408, PubMed:27547826, PubMed:32286952). Plays a role in cell-substrate adhesion, haploid invasive growth, diploid pseudohyphae formation and biofilm (flor) development (PubMed:11027318, PubMed:11157168, PubMed:16043420, PubMed:17921350, PubMed:18001350, PubMed:20619652, PubMed:8710886, PubMed:8955395). Adhesive activity is inhibited by mannose, but not by glucose, maltose, sucrose or galactose (PubMed:16043420, PubMed:22129043).</text>
</comment>
<comment type="interaction">
    <interactant intactId="EBI-2585">
        <id>P08640</id>
    </interactant>
    <interactant intactId="EBI-2585">
        <id>P08640</id>
        <label>FLO11</label>
    </interactant>
    <organismsDiffer>false</organismsDiffer>
    <experiments>3</experiments>
</comment>
<comment type="subcellular location">
    <subcellularLocation>
        <location evidence="5 6 12">Secreted</location>
        <location evidence="5 6 12">Cell wall</location>
    </subcellularLocation>
    <subcellularLocation>
        <location>Membrane</location>
        <topology evidence="12">Lipid-anchor</topology>
        <topology evidence="12">GPI-anchor</topology>
    </subcellularLocation>
    <text evidence="12">The protein is attached to the cell wall via a GPI-anchor and is also shed liberally into extracellular fluid; increased shedding is associated with biofilm mat expansion but decreased invasive growth.</text>
</comment>
<comment type="domain">
    <text evidence="1">The number of the intragenic tandem repeats varies between different S.cerevisiae strains. There is a linear correlation between protein size and the extend of adhesion: the more repeats, the stronger the adhesion properties and the greater the fraction of flocculating cells (By similarity).</text>
</comment>
<comment type="domain">
    <text evidence="13 14 16">The Flo11 domain contains aromatic residues that form two hydrophobic bands on the surface of the protein that confer homophilic binding (PubMed:22129043, PubMed:25960408, PubMed:32286952). The hydrophobic bands are lined by stretches of acidic residues that may sensitise the protein to environmental pH (PubMed:25960408). The domain is required for biofilm formation (PubMed:25960408). The domain does not interact with mannose or calcium ions (PubMed:22129043, PubMed:25960408).</text>
</comment>
<comment type="PTM">
    <text evidence="10 13">Extensively O-mannosylated.</text>
</comment>
<comment type="PTM">
    <text evidence="1">The GPI-anchor is attached to the protein in the endoplasmic reticulum and serves to target the protein to the cell surface. There, the glucosamine-inositol phospholipid moiety is cleaved off and the GPI-modified mannoprotein is covalently attached via its lipidless GPI glycan remnant to the 1,6-beta-glucan of the outer cell wall layer (By similarity).</text>
</comment>
<comment type="PTM">
    <text>A soluble form is probably produced by proteolytic cleavage at the cell surface (shedding).</text>
</comment>
<comment type="miscellaneous">
    <text evidence="20">In the reference strain S288C, the transcriptional activator FLO8 contains an internal in-frame stop codon, leading to impaired FLO11 expression in this strain.</text>
</comment>
<comment type="similarity">
    <text evidence="22">Belongs to the flocculin family. Highly divergent.</text>
</comment>
<reference key="1">
    <citation type="journal article" date="1997" name="Nature">
        <title>The nucleotide sequence of Saccharomyces cerevisiae chromosome IX.</title>
        <authorList>
            <person name="Churcher C.M."/>
            <person name="Bowman S."/>
            <person name="Badcock K."/>
            <person name="Bankier A.T."/>
            <person name="Brown D."/>
            <person name="Chillingworth T."/>
            <person name="Connor R."/>
            <person name="Devlin K."/>
            <person name="Gentles S."/>
            <person name="Hamlin N."/>
            <person name="Harris D.E."/>
            <person name="Horsnell T."/>
            <person name="Hunt S."/>
            <person name="Jagels K."/>
            <person name="Jones M."/>
            <person name="Lye G."/>
            <person name="Moule S."/>
            <person name="Odell C."/>
            <person name="Pearson D."/>
            <person name="Rajandream M.A."/>
            <person name="Rice P."/>
            <person name="Rowley N."/>
            <person name="Skelton J."/>
            <person name="Smith V."/>
            <person name="Walsh S.V."/>
            <person name="Whitehead S."/>
            <person name="Barrell B.G."/>
        </authorList>
    </citation>
    <scope>NUCLEOTIDE SEQUENCE [LARGE SCALE GENOMIC DNA]</scope>
    <source>
        <strain>ATCC 204508 / S288c</strain>
    </source>
</reference>
<reference key="2">
    <citation type="journal article" date="2014" name="G3 (Bethesda)">
        <title>The reference genome sequence of Saccharomyces cerevisiae: Then and now.</title>
        <authorList>
            <person name="Engel S.R."/>
            <person name="Dietrich F.S."/>
            <person name="Fisk D.G."/>
            <person name="Binkley G."/>
            <person name="Balakrishnan R."/>
            <person name="Costanzo M.C."/>
            <person name="Dwight S.S."/>
            <person name="Hitz B.C."/>
            <person name="Karra K."/>
            <person name="Nash R.S."/>
            <person name="Weng S."/>
            <person name="Wong E.D."/>
            <person name="Lloyd P."/>
            <person name="Skrzypek M.S."/>
            <person name="Miyasato S.R."/>
            <person name="Simison M."/>
            <person name="Cherry J.M."/>
        </authorList>
    </citation>
    <scope>GENOME REANNOTATION</scope>
    <source>
        <strain>ATCC 204508 / S288c</strain>
    </source>
</reference>
<reference key="3">
    <citation type="journal article" date="1987" name="J. Bacteriol.">
        <title>Gene fusion is a possible mechanism underlying the evolution of STA1.</title>
        <authorList>
            <person name="Yamashita I."/>
            <person name="Nakamura M."/>
            <person name="Fukui S."/>
        </authorList>
    </citation>
    <scope>NUCLEOTIDE SEQUENCE [GENOMIC DNA] OF 1-242 AND 762-1331</scope>
</reference>
<reference key="4">
    <citation type="journal article" date="1988" name="FEBS Lett.">
        <title>Similar short elements in the 5' regions of the STA2 and SGA genes from Saccharomyces cerevisiae.</title>
        <authorList>
            <person name="Pardo J.M."/>
            <person name="Ianez E."/>
            <person name="Zalacain M."/>
            <person name="Claros M.G."/>
            <person name="Jimenez A."/>
        </authorList>
    </citation>
    <scope>NUCLEOTIDE SEQUENCE [GENOMIC DNA] OF 1-31</scope>
    <source>
        <strain>SPX101-1C</strain>
    </source>
</reference>
<reference key="5">
    <citation type="journal article" date="1996" name="J. Bacteriol.">
        <title>FLO11, a yeast gene related to the STA genes, encodes a novel cell surface flocculin.</title>
        <authorList>
            <person name="Lo W.S."/>
            <person name="Dranginis A.M."/>
        </authorList>
    </citation>
    <scope>FUNCTION</scope>
</reference>
<reference key="6">
    <citation type="journal article" date="1996" name="Proc. Natl. Acad. Sci. U.S.A.">
        <title>Muc1, a mucin-like protein that is regulated by Mss10, is critical for pseudohyphal differentiation in yeast.</title>
        <authorList>
            <person name="Lambrechts M.G."/>
            <person name="Bauer F.F."/>
            <person name="Marmur J."/>
            <person name="Pretorius I.S."/>
        </authorList>
    </citation>
    <scope>FUNCTION</scope>
</reference>
<reference key="7">
    <citation type="journal article" date="1999" name="J. Bacteriol.">
        <title>Amino acid residues in the omega-minus region participate in cellular localization of yeast glycosylphosphatidylinositol-attached proteins.</title>
        <authorList>
            <person name="Hamada K."/>
            <person name="Terashima H."/>
            <person name="Arisawa M."/>
            <person name="Yabuki N."/>
            <person name="Kitada K."/>
        </authorList>
    </citation>
    <scope>SUBCELLULAR LOCATION</scope>
</reference>
<reference key="8">
    <citation type="journal article" date="2000" name="Proc. Natl. Acad. Sci. U.S.A.">
        <title>A Saccharomyces gene family involved in invasive growth, cell-cell adhesion, and mating.</title>
        <authorList>
            <person name="Guo B."/>
            <person name="Styles C.A."/>
            <person name="Feng Q."/>
            <person name="Fink G.R."/>
        </authorList>
    </citation>
    <scope>FUNCTION</scope>
    <scope>SUBCELLULAR LOCATION</scope>
</reference>
<reference key="9">
    <citation type="journal article" date="2001" name="Science">
        <title>Bakers' yeast, a model for fungal biofilm formation.</title>
        <authorList>
            <person name="Reynolds T.B."/>
            <person name="Fink G.R."/>
        </authorList>
    </citation>
    <scope>FUNCTION</scope>
    <source>
        <strain>Sigma 1278B</strain>
    </source>
</reference>
<reference key="10">
    <citation type="journal article" date="2005" name="FEMS Yeast Res.">
        <title>Characteristics of Flo11-dependent flocculation in Saccharomyces cerevisiae.</title>
        <authorList>
            <person name="Bayly J.C."/>
            <person name="Douglas L.M."/>
            <person name="Pretorius I.S."/>
            <person name="Bauer F.F."/>
            <person name="Dranginis A.M."/>
        </authorList>
    </citation>
    <scope>FUNCTION</scope>
</reference>
<reference key="11">
    <citation type="journal article" date="2005" name="Nat. Genet.">
        <title>Intragenic tandem repeats generate functional variability.</title>
        <authorList>
            <person name="Verstrepen K.J."/>
            <person name="Jansen A."/>
            <person name="Lewitter F."/>
            <person name="Fink G.R."/>
        </authorList>
    </citation>
    <scope>REPEATS</scope>
</reference>
<reference key="12">
    <citation type="journal article" date="2007" name="Eukaryot. Cell">
        <title>Expression and characterization of the flocculin Flo11/Muc1, a Saccharomyces cerevisiae mannoprotein with homotypic properties of adhesion.</title>
        <authorList>
            <person name="Douglas L.M."/>
            <person name="Li L."/>
            <person name="Yang Y."/>
            <person name="Dranginis A.M."/>
        </authorList>
    </citation>
    <scope>FUNCTION</scope>
    <scope>GLYCOSYLATION</scope>
</reference>
<reference key="13">
    <citation type="journal article" date="2007" name="Mol. Microbiol.">
        <title>Differential Flo8p-dependent regulation of FLO1 and FLO11 for cell-cell and cell-substrate adherence of S.cerevisiae S288c.</title>
        <authorList>
            <person name="Fichtner L."/>
            <person name="Schulze F."/>
            <person name="Braus G.H."/>
        </authorList>
    </citation>
    <scope>FUNCTION</scope>
    <source>
        <strain>Sigma 1278B</strain>
    </source>
</reference>
<reference key="14">
    <citation type="journal article" date="2010" name="Curr. Biol.">
        <title>Shedding of the mucin-like flocculin Flo11p reveals a new aspect of fungal adhesion regulation.</title>
        <authorList>
            <person name="Karunanithi S."/>
            <person name="Vadaie N."/>
            <person name="Chavel C.A."/>
            <person name="Birkaya B."/>
            <person name="Joshi J."/>
            <person name="Grell L."/>
            <person name="Cullen P.J."/>
        </authorList>
    </citation>
    <scope>FUNCTION</scope>
    <scope>SUBCELLULAR LOCATION</scope>
    <scope>SHEDDING</scope>
    <scope>MUTAGENESIS OF 1340-ILE--PHE-1367</scope>
</reference>
<reference key="15">
    <citation type="journal article" date="2012" name="FEMS Yeast Res.">
        <title>The N-terminal domain of the Flo11 protein from Saccharomyces cerevisiae is an adhesin without mannose-binding activity.</title>
        <authorList>
            <person name="Goossens K.V."/>
            <person name="Willaert R.G."/>
        </authorList>
    </citation>
    <scope>FUNCTION</scope>
    <scope>DOMAIN</scope>
    <scope>GLYCOSYLATION</scope>
</reference>
<reference key="16">
    <citation type="journal article" date="2016" name="MSphere">
        <title>Molecular Basis for Strain Variation in the Saccharomyces cerevisiae Adhesin Flo11p.</title>
        <authorList>
            <person name="Barua S."/>
            <person name="Li L."/>
            <person name="Lipke P.N."/>
            <person name="Dranginis A.M."/>
        </authorList>
    </citation>
    <scope>FUNCTION</scope>
</reference>
<reference key="17">
    <citation type="journal article" date="2020" name="Elife">
        <title>Kin discrimination in social yeast is mediated by cell surface receptors of the Flo11 adhesin family.</title>
        <authorList>
            <person name="Brueckner S."/>
            <person name="Schubert R."/>
            <person name="Kraushaar T."/>
            <person name="Hartmann R."/>
            <person name="Hoffmann D."/>
            <person name="Jelli E."/>
            <person name="Drescher K."/>
            <person name="Mueller D.J."/>
            <person name="Oliver Essen L."/>
            <person name="Moesch H.U."/>
        </authorList>
    </citation>
    <scope>FUNCTION</scope>
    <scope>DOMAIN</scope>
    <scope>MUTAGENESIS OF TYR-111; TYR-113; TYR-118; TYR-133; TRP-144 AND TYR-196</scope>
</reference>
<reference key="18">
    <citation type="journal article" date="2015" name="Structure">
        <title>Interactions by the Fungal Flo11 Adhesin Depend on a Fibronectin Type III-like Adhesin Domain Girdled by Aromatic Bands.</title>
        <authorList>
            <person name="Kraushaar T."/>
            <person name="Brueckner S."/>
            <person name="Veelders M."/>
            <person name="Rhinow D."/>
            <person name="Schreiner F."/>
            <person name="Birke R."/>
            <person name="Pagenstecher A."/>
            <person name="Moesch H.U."/>
            <person name="Essen L.O."/>
        </authorList>
    </citation>
    <scope>X-RAY CRYSTALLOGRAPHY (0.89 ANGSTROMS) OF 22-211</scope>
    <scope>FUNCTION</scope>
    <scope>DOMAIN</scope>
    <scope>MUTAGENESIS OF 31-SER--THR-213; TYR-111; TYR-113 AND TYR-118</scope>
    <scope>DISULFIDE BONDS</scope>
</reference>
<proteinExistence type="evidence at protein level"/>
<gene>
    <name evidence="19 23" type="primary">FLO11</name>
    <name type="synonym">MAL5</name>
    <name evidence="21" type="synonym">MUC1</name>
    <name type="synonym">S1</name>
    <name type="synonym">S2</name>
    <name evidence="23" type="ordered locus">YIR019C</name>
</gene>
<keyword id="KW-0002">3D-structure</keyword>
<keyword id="KW-0130">Cell adhesion</keyword>
<keyword id="KW-0134">Cell wall</keyword>
<keyword id="KW-1015">Disulfide bond</keyword>
<keyword id="KW-0325">Glycoprotein</keyword>
<keyword id="KW-0336">GPI-anchor</keyword>
<keyword id="KW-0449">Lipoprotein</keyword>
<keyword id="KW-0472">Membrane</keyword>
<keyword id="KW-1185">Reference proteome</keyword>
<keyword id="KW-0677">Repeat</keyword>
<keyword id="KW-0964">Secreted</keyword>
<keyword id="KW-0732">Signal</keyword>
<accession>P08640</accession>
<accession>D6VVV0</accession>
<accession>P08068</accession>
<protein>
    <recommendedName>
        <fullName>Flocculation protein FLO11</fullName>
        <shortName>Flo11p</shortName>
        <shortName>Flocculin-11</shortName>
    </recommendedName>
    <alternativeName>
        <fullName>Mucin-like protein 1</fullName>
    </alternativeName>
</protein>
<organism>
    <name type="scientific">Saccharomyces cerevisiae (strain ATCC 204508 / S288c)</name>
    <name type="common">Baker's yeast</name>
    <dbReference type="NCBI Taxonomy" id="559292"/>
    <lineage>
        <taxon>Eukaryota</taxon>
        <taxon>Fungi</taxon>
        <taxon>Dikarya</taxon>
        <taxon>Ascomycota</taxon>
        <taxon>Saccharomycotina</taxon>
        <taxon>Saccharomycetes</taxon>
        <taxon>Saccharomycetales</taxon>
        <taxon>Saccharomycetaceae</taxon>
        <taxon>Saccharomyces</taxon>
    </lineage>
</organism>
<feature type="signal peptide" evidence="2">
    <location>
        <begin position="1"/>
        <end position="21"/>
    </location>
</feature>
<feature type="chain" id="PRO_0000019586" description="Flocculation protein FLO11">
    <location>
        <begin position="22"/>
        <end position="1346"/>
    </location>
</feature>
<feature type="propeptide" id="PRO_0000019587" description="Removed in mature form" evidence="2">
    <location>
        <begin position="1347"/>
        <end position="1367"/>
    </location>
</feature>
<feature type="domain" description="Flo11" evidence="3">
    <location>
        <begin position="31"/>
        <end position="207"/>
    </location>
</feature>
<feature type="repeat" description="1-1" evidence="9">
    <location>
        <begin position="210"/>
        <end position="219"/>
    </location>
</feature>
<feature type="repeat" description="1-2" evidence="9">
    <location>
        <begin position="220"/>
        <end position="229"/>
    </location>
</feature>
<feature type="repeat" description="1-3" evidence="9">
    <location>
        <begin position="230"/>
        <end position="239"/>
    </location>
</feature>
<feature type="repeat" description="1-4" evidence="9">
    <location>
        <begin position="240"/>
        <end position="249"/>
    </location>
</feature>
<feature type="repeat" description="2-1" evidence="9">
    <location>
        <begin position="262"/>
        <end position="274"/>
    </location>
</feature>
<feature type="repeat" description="2-2" evidence="9">
    <location>
        <begin position="275"/>
        <end position="287"/>
    </location>
</feature>
<feature type="repeat" description="3-1" evidence="9">
    <location>
        <begin position="313"/>
        <end position="327"/>
    </location>
</feature>
<feature type="repeat" description="3-2" evidence="9">
    <location>
        <begin position="328"/>
        <end position="342"/>
    </location>
</feature>
<feature type="repeat" description="4-1" evidence="9">
    <location>
        <begin position="343"/>
        <end position="354"/>
    </location>
</feature>
<feature type="repeat" description="3-3" evidence="9">
    <location>
        <begin position="355"/>
        <end position="369"/>
    </location>
</feature>
<feature type="repeat" description="4-2" evidence="9">
    <location>
        <begin position="370"/>
        <end position="381"/>
    </location>
</feature>
<feature type="repeat" description="4-3" evidence="9">
    <location>
        <begin position="382"/>
        <end position="393"/>
    </location>
</feature>
<feature type="repeat" description="3-4" evidence="9">
    <location>
        <begin position="394"/>
        <end position="408"/>
    </location>
</feature>
<feature type="repeat" description="4-4" evidence="9">
    <location>
        <begin position="409"/>
        <end position="420"/>
    </location>
</feature>
<feature type="repeat" description="4-5" evidence="9">
    <location>
        <begin position="421"/>
        <end position="432"/>
    </location>
</feature>
<feature type="repeat" description="4-6" evidence="9">
    <location>
        <begin position="433"/>
        <end position="444"/>
    </location>
</feature>
<feature type="repeat" description="4-7" evidence="9">
    <location>
        <begin position="445"/>
        <end position="456"/>
    </location>
</feature>
<feature type="repeat" description="3-5" evidence="9">
    <location>
        <begin position="457"/>
        <end position="471"/>
    </location>
</feature>
<feature type="repeat" description="4-8" evidence="9">
    <location>
        <begin position="472"/>
        <end position="483"/>
    </location>
</feature>
<feature type="repeat" description="3-6" evidence="9">
    <location>
        <begin position="484"/>
        <end position="498"/>
    </location>
</feature>
<feature type="repeat" description="4-9" evidence="9">
    <location>
        <begin position="499"/>
        <end position="510"/>
    </location>
</feature>
<feature type="repeat" description="3-7" evidence="9">
    <location>
        <begin position="511"/>
        <end position="525"/>
    </location>
</feature>
<feature type="repeat" description="3-8" evidence="9">
    <location>
        <begin position="526"/>
        <end position="540"/>
    </location>
</feature>
<feature type="repeat" description="4-10" evidence="9">
    <location>
        <begin position="541"/>
        <end position="552"/>
    </location>
</feature>
<feature type="repeat" description="4-11" evidence="9">
    <location>
        <begin position="568"/>
        <end position="579"/>
    </location>
</feature>
<feature type="repeat" description="3-9" evidence="9">
    <location>
        <begin position="580"/>
        <end position="594"/>
    </location>
</feature>
<feature type="repeat" description="3-10" evidence="9">
    <location>
        <begin position="595"/>
        <end position="609"/>
    </location>
</feature>
<feature type="repeat" description="3-11" evidence="9">
    <location>
        <begin position="610"/>
        <end position="624"/>
    </location>
</feature>
<feature type="repeat" description="4-12" evidence="9">
    <location>
        <begin position="625"/>
        <end position="636"/>
    </location>
</feature>
<feature type="repeat" description="3-12" evidence="9">
    <location>
        <begin position="637"/>
        <end position="651"/>
    </location>
</feature>
<feature type="repeat" description="3-13" evidence="9">
    <location>
        <begin position="652"/>
        <end position="666"/>
    </location>
</feature>
<feature type="repeat" description="3-14" evidence="9">
    <location>
        <begin position="667"/>
        <end position="681"/>
    </location>
</feature>
<feature type="repeat" description="4-13" evidence="9">
    <location>
        <begin position="682"/>
        <end position="693"/>
    </location>
</feature>
<feature type="repeat" description="4-14" evidence="9">
    <location>
        <begin position="694"/>
        <end position="705"/>
    </location>
</feature>
<feature type="repeat" description="3-15" evidence="9">
    <location>
        <begin position="706"/>
        <end position="720"/>
    </location>
</feature>
<feature type="repeat" description="3-16" evidence="9">
    <location>
        <begin position="721"/>
        <end position="735"/>
    </location>
</feature>
<feature type="repeat" description="3-17" evidence="9">
    <location>
        <begin position="736"/>
        <end position="750"/>
    </location>
</feature>
<feature type="repeat" description="4-15" evidence="9">
    <location>
        <begin position="751"/>
        <end position="762"/>
    </location>
</feature>
<feature type="repeat" description="3-18" evidence="9">
    <location>
        <begin position="763"/>
        <end position="777"/>
    </location>
</feature>
<feature type="repeat" description="3-19" evidence="9">
    <location>
        <begin position="778"/>
        <end position="792"/>
    </location>
</feature>
<feature type="repeat" description="3-21" evidence="9">
    <location>
        <begin position="808"/>
        <end position="822"/>
    </location>
</feature>
<feature type="repeat" description="3-20" evidence="9">
    <location>
        <begin position="838"/>
        <end position="852"/>
    </location>
</feature>
<feature type="repeat" description="3-22" evidence="9">
    <location>
        <begin position="865"/>
        <end position="879"/>
    </location>
</feature>
<feature type="repeat" description="5-1" evidence="9">
    <location>
        <begin position="937"/>
        <end position="968"/>
    </location>
</feature>
<feature type="repeat" description="5-2" evidence="9">
    <location>
        <begin position="981"/>
        <end position="1012"/>
    </location>
</feature>
<feature type="repeat" description="5-3" evidence="9">
    <location>
        <begin position="1088"/>
        <end position="1119"/>
    </location>
</feature>
<feature type="region of interest" description="Disordered" evidence="4">
    <location>
        <begin position="209"/>
        <end position="975"/>
    </location>
</feature>
<feature type="region of interest" description="4 X 10 AA repeats, Ser/Thr-rich">
    <location>
        <begin position="210"/>
        <end position="249"/>
    </location>
</feature>
<feature type="region of interest" description="2 X 13 AA repeats, Thr-rich">
    <location>
        <begin position="262"/>
        <end position="287"/>
    </location>
</feature>
<feature type="region of interest" description="22 X 15 AA approximate repeats, Ser-rich">
    <location>
        <begin position="313"/>
        <end position="852"/>
    </location>
</feature>
<feature type="region of interest" description="15 X 12 AA repeats, Ser/Thr-rich">
    <location>
        <begin position="343"/>
        <end position="762"/>
    </location>
</feature>
<feature type="region of interest" description="3 X 32 AA tandem repeats, Thr-rich">
    <location>
        <begin position="937"/>
        <end position="1119"/>
    </location>
</feature>
<feature type="region of interest" description="Disordered" evidence="4">
    <location>
        <begin position="1008"/>
        <end position="1032"/>
    </location>
</feature>
<feature type="compositionally biased region" description="Low complexity" evidence="4">
    <location>
        <begin position="209"/>
        <end position="267"/>
    </location>
</feature>
<feature type="compositionally biased region" description="Basic and acidic residues" evidence="4">
    <location>
        <begin position="281"/>
        <end position="292"/>
    </location>
</feature>
<feature type="compositionally biased region" description="Low complexity" evidence="4">
    <location>
        <begin position="302"/>
        <end position="900"/>
    </location>
</feature>
<feature type="compositionally biased region" description="Low complexity" evidence="4">
    <location>
        <begin position="910"/>
        <end position="948"/>
    </location>
</feature>
<feature type="compositionally biased region" description="Polar residues" evidence="4">
    <location>
        <begin position="949"/>
        <end position="961"/>
    </location>
</feature>
<feature type="compositionally biased region" description="Low complexity" evidence="4">
    <location>
        <begin position="962"/>
        <end position="975"/>
    </location>
</feature>
<feature type="compositionally biased region" description="Low complexity" evidence="4">
    <location>
        <begin position="1014"/>
        <end position="1032"/>
    </location>
</feature>
<feature type="lipid moiety-binding region" description="GPI-anchor amidated glycine" evidence="2">
    <location>
        <position position="1346"/>
    </location>
</feature>
<feature type="glycosylation site" description="N-linked (GlcNAc...) asparagine" evidence="2">
    <location>
        <position position="817"/>
    </location>
</feature>
<feature type="glycosylation site" description="N-linked (GlcNAc...) asparagine" evidence="2">
    <location>
        <position position="874"/>
    </location>
</feature>
<feature type="disulfide bond" evidence="14 24 25 26">
    <location>
        <begin position="37"/>
        <end position="201"/>
    </location>
</feature>
<feature type="disulfide bond" evidence="14 24 25 26">
    <location>
        <begin position="44"/>
        <end position="179"/>
    </location>
</feature>
<feature type="disulfide bond" evidence="14 24 25 26">
    <location>
        <begin position="141"/>
        <end position="205"/>
    </location>
</feature>
<feature type="mutagenesis site" description="Disrupts homotypic domain interactions; when associated with D-113 and D-118." evidence="14 16">
    <original>Y</original>
    <variation>D</variation>
    <location>
        <position position="111"/>
    </location>
</feature>
<feature type="mutagenesis site" description="Disrupts homotypic domain interactions; when associated with D-111 and D-118." evidence="14 16">
    <original>Y</original>
    <variation>D</variation>
    <location>
        <position position="113"/>
    </location>
</feature>
<feature type="mutagenesis site" description="Disrupts homotypic domain interactions; when associated with D-111 and D-113." evidence="14 16">
    <original>Y</original>
    <variation>D</variation>
    <location>
        <position position="118"/>
    </location>
</feature>
<feature type="mutagenesis site" description="Disrupts homotypic domain interactions; when associated with D-144 and D-196." evidence="16">
    <original>Y</original>
    <variation>D</variation>
    <location>
        <position position="133"/>
    </location>
</feature>
<feature type="mutagenesis site" description="Disrupts homotypic domain interactions; when associated with D-133 and D-196." evidence="16">
    <original>W</original>
    <variation>D</variation>
    <location>
        <position position="144"/>
    </location>
</feature>
<feature type="mutagenesis site" description="Disrupts homotypic domain interactions; when associated with D-133 and D-144." evidence="16">
    <original>Y</original>
    <variation>D</variation>
    <location>
        <position position="196"/>
    </location>
</feature>
<feature type="mutagenesis site" description="Increased shedding, associated with loss of GPI-anchor site." evidence="12">
    <location>
        <begin position="1340"/>
        <end position="1367"/>
    </location>
</feature>
<feature type="strand" evidence="27">
    <location>
        <begin position="31"/>
        <end position="33"/>
    </location>
</feature>
<feature type="strand" evidence="27">
    <location>
        <begin position="41"/>
        <end position="43"/>
    </location>
</feature>
<feature type="helix" evidence="27">
    <location>
        <begin position="50"/>
        <end position="54"/>
    </location>
</feature>
<feature type="turn" evidence="27">
    <location>
        <begin position="55"/>
        <end position="57"/>
    </location>
</feature>
<feature type="strand" evidence="27">
    <location>
        <begin position="61"/>
        <end position="72"/>
    </location>
</feature>
<feature type="strand" evidence="27">
    <location>
        <begin position="75"/>
        <end position="86"/>
    </location>
</feature>
<feature type="helix" evidence="27">
    <location>
        <begin position="90"/>
        <end position="92"/>
    </location>
</feature>
<feature type="strand" evidence="27">
    <location>
        <begin position="93"/>
        <end position="100"/>
    </location>
</feature>
<feature type="strand" evidence="27">
    <location>
        <begin position="102"/>
        <end position="104"/>
    </location>
</feature>
<feature type="strand" evidence="27">
    <location>
        <begin position="108"/>
        <end position="112"/>
    </location>
</feature>
<feature type="turn" evidence="27">
    <location>
        <begin position="113"/>
        <end position="116"/>
    </location>
</feature>
<feature type="strand" evidence="27">
    <location>
        <begin position="125"/>
        <end position="133"/>
    </location>
</feature>
<feature type="strand" evidence="27">
    <location>
        <begin position="136"/>
        <end position="139"/>
    </location>
</feature>
<feature type="strand" evidence="27">
    <location>
        <begin position="142"/>
        <end position="144"/>
    </location>
</feature>
<feature type="strand" evidence="27">
    <location>
        <begin position="149"/>
        <end position="155"/>
    </location>
</feature>
<feature type="helix" evidence="27">
    <location>
        <begin position="157"/>
        <end position="165"/>
    </location>
</feature>
<feature type="strand" evidence="27">
    <location>
        <begin position="171"/>
        <end position="177"/>
    </location>
</feature>
<feature type="strand" evidence="27">
    <location>
        <begin position="186"/>
        <end position="192"/>
    </location>
</feature>
<feature type="strand" evidence="27">
    <location>
        <begin position="195"/>
        <end position="198"/>
    </location>
</feature>
<feature type="helix" evidence="27">
    <location>
        <begin position="199"/>
        <end position="201"/>
    </location>
</feature>